<reference key="1">
    <citation type="journal article" date="1994" name="Neuron">
        <title>Cloning and characterization of a mammalian melatonin receptor that mediates reproductive and circadian responses.</title>
        <authorList>
            <person name="Reppert S.M."/>
            <person name="Weaver D.R."/>
            <person name="Ebisawa T."/>
        </authorList>
    </citation>
    <scope>NUCLEOTIDE SEQUENCE [MRNA]</scope>
</reference>
<reference key="2">
    <citation type="journal article" date="1999" name="Biochem. Biophys. Res. Commun.">
        <title>Alleic variants of human melatonin 1a receptor: function and prevalence in subjects with circadian rhythm sleep disorders.</title>
        <authorList>
            <person name="Ebisawa T."/>
            <person name="Kajimura N."/>
            <person name="Uchiyama M."/>
            <person name="Katoh M."/>
            <person name="Sekimoto M."/>
            <person name="Watanabe T."/>
            <person name="Ozeki Y."/>
            <person name="Ikeda M."/>
            <person name="Jodoi T."/>
            <person name="Sugishita M."/>
            <person name="Iwase T."/>
            <person name="Kamei Y."/>
            <person name="Kim K."/>
            <person name="Shibui K."/>
            <person name="Kudo Y."/>
            <person name="Yamada N."/>
            <person name="Toyoshima R."/>
            <person name="Okawa M."/>
            <person name="Takahashi K."/>
            <person name="Yamauchi T."/>
        </authorList>
    </citation>
    <scope>NUCLEOTIDE SEQUENCE [GENOMIC DNA]</scope>
    <scope>VARIANTS TRP-54 AND VAL-157</scope>
    <source>
        <tissue>Leukocyte</tissue>
    </source>
</reference>
<reference key="3">
    <citation type="submission" date="2007-12" db="EMBL/GenBank/DDBJ databases">
        <authorList>
            <person name="Huang Y.-H."/>
            <person name="Kaighin V.A."/>
            <person name="Martin A.L."/>
            <person name="Aronstam R.S."/>
        </authorList>
    </citation>
    <scope>NUCLEOTIDE SEQUENCE [MRNA]</scope>
    <source>
        <tissue>Hippocampus</tissue>
    </source>
</reference>
<reference key="4">
    <citation type="journal article" date="2004" name="Genome Res.">
        <title>The status, quality, and expansion of the NIH full-length cDNA project: the Mammalian Gene Collection (MGC).</title>
        <authorList>
            <consortium name="The MGC Project Team"/>
        </authorList>
    </citation>
    <scope>NUCLEOTIDE SEQUENCE [LARGE SCALE MRNA]</scope>
</reference>
<reference key="5">
    <citation type="journal article" date="2019" name="Nature">
        <title>Structural basis of ligand recognition at the human MT1 melatonin receptor.</title>
        <authorList>
            <person name="Stauch B."/>
            <person name="Johansson L.C."/>
            <person name="McCorvy J.D."/>
            <person name="Patel N."/>
            <person name="Han G.W."/>
            <person name="Huang X.P."/>
            <person name="Gati C."/>
            <person name="Batyuk A."/>
            <person name="Slocum S.T."/>
            <person name="Ishchenko A."/>
            <person name="Brehm W."/>
            <person name="White T.A."/>
            <person name="Michaelian N."/>
            <person name="Madsen C."/>
            <person name="Zhu L."/>
            <person name="Grant T.D."/>
            <person name="Grandner J.M."/>
            <person name="Shiriaeva A."/>
            <person name="Olsen R.H.J."/>
            <person name="Tribo A.R."/>
            <person name="Yous S."/>
            <person name="Stevens R.C."/>
            <person name="Weierstall U."/>
            <person name="Katritch V."/>
            <person name="Roth B.L."/>
            <person name="Liu W."/>
            <person name="Cherezov V."/>
        </authorList>
    </citation>
    <scope>X-RAY CRYSTALLOGRAPHY (2.80 ANGSTROMS) OF 12-325 IN COMPLEX WITH MELATONIN ANALOG</scope>
    <scope>DISULFIDE BOND</scope>
</reference>
<gene>
    <name type="primary">MTNR1A</name>
</gene>
<dbReference type="EMBL" id="U14108">
    <property type="protein sequence ID" value="AAB17720.1"/>
    <property type="molecule type" value="mRNA"/>
</dbReference>
<dbReference type="EMBL" id="AB029933">
    <property type="protein sequence ID" value="BAA85303.1"/>
    <property type="molecule type" value="Genomic_DNA"/>
</dbReference>
<dbReference type="EMBL" id="EU432127">
    <property type="protein sequence ID" value="ABY87926.1"/>
    <property type="molecule type" value="mRNA"/>
</dbReference>
<dbReference type="EMBL" id="BC074946">
    <property type="protein sequence ID" value="AAH74946.1"/>
    <property type="molecule type" value="mRNA"/>
</dbReference>
<dbReference type="EMBL" id="BC074947">
    <property type="protein sequence ID" value="AAH74947.1"/>
    <property type="molecule type" value="mRNA"/>
</dbReference>
<dbReference type="EMBL" id="BC126297">
    <property type="protein sequence ID" value="AAI26298.1"/>
    <property type="molecule type" value="mRNA"/>
</dbReference>
<dbReference type="EMBL" id="BC126299">
    <property type="protein sequence ID" value="AAI26300.1"/>
    <property type="molecule type" value="mRNA"/>
</dbReference>
<dbReference type="CCDS" id="CCDS3848.1"/>
<dbReference type="PIR" id="I38848">
    <property type="entry name" value="I38848"/>
</dbReference>
<dbReference type="RefSeq" id="NP_005949.1">
    <property type="nucleotide sequence ID" value="NM_005958.4"/>
</dbReference>
<dbReference type="PDB" id="6ME2">
    <property type="method" value="X-ray"/>
    <property type="resolution" value="2.80 A"/>
    <property type="chains" value="A=12-325"/>
</dbReference>
<dbReference type="PDB" id="6ME3">
    <property type="method" value="X-ray"/>
    <property type="resolution" value="2.90 A"/>
    <property type="chains" value="A=12-325"/>
</dbReference>
<dbReference type="PDB" id="6ME4">
    <property type="method" value="X-ray"/>
    <property type="resolution" value="3.20 A"/>
    <property type="chains" value="A=12-325"/>
</dbReference>
<dbReference type="PDB" id="6ME5">
    <property type="method" value="X-ray"/>
    <property type="resolution" value="3.20 A"/>
    <property type="chains" value="A=12-325"/>
</dbReference>
<dbReference type="PDB" id="7DB6">
    <property type="method" value="EM"/>
    <property type="resolution" value="3.30 A"/>
    <property type="chains" value="D=1-340"/>
</dbReference>
<dbReference type="PDB" id="7VGY">
    <property type="method" value="EM"/>
    <property type="resolution" value="3.10 A"/>
    <property type="chains" value="A=1-350"/>
</dbReference>
<dbReference type="PDB" id="7VGZ">
    <property type="method" value="EM"/>
    <property type="resolution" value="3.30 A"/>
    <property type="chains" value="B=1-350"/>
</dbReference>
<dbReference type="PDBsum" id="6ME2"/>
<dbReference type="PDBsum" id="6ME3"/>
<dbReference type="PDBsum" id="6ME4"/>
<dbReference type="PDBsum" id="6ME5"/>
<dbReference type="PDBsum" id="7DB6"/>
<dbReference type="PDBsum" id="7VGY"/>
<dbReference type="PDBsum" id="7VGZ"/>
<dbReference type="EMDB" id="EMD-30627"/>
<dbReference type="EMDB" id="EMD-31980"/>
<dbReference type="EMDB" id="EMD-31981"/>
<dbReference type="SMR" id="P48039"/>
<dbReference type="BioGRID" id="110639">
    <property type="interactions" value="235"/>
</dbReference>
<dbReference type="CORUM" id="P48039"/>
<dbReference type="ELM" id="P48039"/>
<dbReference type="FunCoup" id="P48039">
    <property type="interactions" value="638"/>
</dbReference>
<dbReference type="IntAct" id="P48039">
    <property type="interactions" value="224"/>
</dbReference>
<dbReference type="MINT" id="P48039"/>
<dbReference type="STRING" id="9606.ENSP00000302811"/>
<dbReference type="BindingDB" id="P48039"/>
<dbReference type="ChEMBL" id="CHEMBL1945"/>
<dbReference type="DrugBank" id="DB06594">
    <property type="generic name" value="Agomelatine"/>
</dbReference>
<dbReference type="DrugBank" id="DB01065">
    <property type="generic name" value="Melatonin"/>
</dbReference>
<dbReference type="DrugBank" id="DB08190">
    <property type="generic name" value="N-[2-(2-iodo-5-methoxy-1H-indol-3-yl)ethyl]acetamide"/>
</dbReference>
<dbReference type="DrugBank" id="DB04275">
    <property type="generic name" value="N-acetylserotonin"/>
</dbReference>
<dbReference type="DrugBank" id="DB12288">
    <property type="generic name" value="Piromelatine"/>
</dbReference>
<dbReference type="DrugBank" id="DB00980">
    <property type="generic name" value="Ramelteon"/>
</dbReference>
<dbReference type="DrugBank" id="DB02709">
    <property type="generic name" value="Resveratrol"/>
</dbReference>
<dbReference type="DrugBank" id="DB09071">
    <property type="generic name" value="Tasimelteon"/>
</dbReference>
<dbReference type="DrugBank" id="DB16909">
    <property type="generic name" value="TIK-301"/>
</dbReference>
<dbReference type="DrugCentral" id="P48039"/>
<dbReference type="GuidetoPHARMACOLOGY" id="287"/>
<dbReference type="TCDB" id="9.A.14.1.3">
    <property type="family name" value="the g-protein-coupled receptor (gpcr) family"/>
</dbReference>
<dbReference type="GlyCosmos" id="P48039">
    <property type="glycosylation" value="2 sites, No reported glycans"/>
</dbReference>
<dbReference type="GlyGen" id="P48039">
    <property type="glycosylation" value="2 sites"/>
</dbReference>
<dbReference type="iPTMnet" id="P48039"/>
<dbReference type="BioMuta" id="MTNR1A"/>
<dbReference type="DMDM" id="1346544"/>
<dbReference type="PaxDb" id="9606-ENSP00000302811"/>
<dbReference type="Antibodypedia" id="29126">
    <property type="antibodies" value="343 antibodies from 32 providers"/>
</dbReference>
<dbReference type="DNASU" id="4543"/>
<dbReference type="Ensembl" id="ENST00000307161.5">
    <property type="protein sequence ID" value="ENSP00000302811.5"/>
    <property type="gene ID" value="ENSG00000168412.7"/>
</dbReference>
<dbReference type="Ensembl" id="ENST00000703170.1">
    <property type="protein sequence ID" value="ENSP00000515216.1"/>
    <property type="gene ID" value="ENSG00000168412.7"/>
</dbReference>
<dbReference type="GeneID" id="4543"/>
<dbReference type="KEGG" id="hsa:4543"/>
<dbReference type="MANE-Select" id="ENST00000307161.5">
    <property type="protein sequence ID" value="ENSP00000302811.5"/>
    <property type="RefSeq nucleotide sequence ID" value="NM_005958.4"/>
    <property type="RefSeq protein sequence ID" value="NP_005949.1"/>
</dbReference>
<dbReference type="UCSC" id="uc003izd.2">
    <property type="organism name" value="human"/>
</dbReference>
<dbReference type="AGR" id="HGNC:7463"/>
<dbReference type="CTD" id="4543"/>
<dbReference type="DisGeNET" id="4543"/>
<dbReference type="GeneCards" id="MTNR1A"/>
<dbReference type="HGNC" id="HGNC:7463">
    <property type="gene designation" value="MTNR1A"/>
</dbReference>
<dbReference type="HPA" id="ENSG00000168412">
    <property type="expression patterns" value="Tissue enhanced (kidney)"/>
</dbReference>
<dbReference type="MIM" id="600665">
    <property type="type" value="gene"/>
</dbReference>
<dbReference type="neXtProt" id="NX_P48039"/>
<dbReference type="OpenTargets" id="ENSG00000168412"/>
<dbReference type="PharmGKB" id="PA31267"/>
<dbReference type="VEuPathDB" id="HostDB:ENSG00000168412"/>
<dbReference type="eggNOG" id="KOG3656">
    <property type="taxonomic scope" value="Eukaryota"/>
</dbReference>
<dbReference type="GeneTree" id="ENSGT00940000160321"/>
<dbReference type="HOGENOM" id="CLU_009579_3_3_1"/>
<dbReference type="InParanoid" id="P48039"/>
<dbReference type="OMA" id="HCQISAF"/>
<dbReference type="OrthoDB" id="10044919at2759"/>
<dbReference type="PAN-GO" id="P48039">
    <property type="GO annotations" value="4 GO annotations based on evolutionary models"/>
</dbReference>
<dbReference type="PhylomeDB" id="P48039"/>
<dbReference type="TreeFam" id="TF331693"/>
<dbReference type="PathwayCommons" id="P48039"/>
<dbReference type="Reactome" id="R-HSA-373076">
    <property type="pathway name" value="Class A/1 (Rhodopsin-like receptors)"/>
</dbReference>
<dbReference type="Reactome" id="R-HSA-418594">
    <property type="pathway name" value="G alpha (i) signalling events"/>
</dbReference>
<dbReference type="SignaLink" id="P48039"/>
<dbReference type="SIGNOR" id="P48039"/>
<dbReference type="BioGRID-ORCS" id="4543">
    <property type="hits" value="8 hits in 1161 CRISPR screens"/>
</dbReference>
<dbReference type="GeneWiki" id="Melatonin_receptor_1A"/>
<dbReference type="GenomeRNAi" id="4543"/>
<dbReference type="Pharos" id="P48039">
    <property type="development level" value="Tclin"/>
</dbReference>
<dbReference type="PRO" id="PR:P48039"/>
<dbReference type="Proteomes" id="UP000005640">
    <property type="component" value="Chromosome 4"/>
</dbReference>
<dbReference type="RNAct" id="P48039">
    <property type="molecule type" value="protein"/>
</dbReference>
<dbReference type="Bgee" id="ENSG00000168412">
    <property type="expression patterns" value="Expressed in male germ line stem cell (sensu Vertebrata) in testis and 31 other cell types or tissues"/>
</dbReference>
<dbReference type="GO" id="GO:0005886">
    <property type="term" value="C:plasma membrane"/>
    <property type="evidence" value="ECO:0000314"/>
    <property type="project" value="BHF-UCL"/>
</dbReference>
<dbReference type="GO" id="GO:0043235">
    <property type="term" value="C:receptor complex"/>
    <property type="evidence" value="ECO:0000314"/>
    <property type="project" value="BHF-UCL"/>
</dbReference>
<dbReference type="GO" id="GO:0004930">
    <property type="term" value="F:G protein-coupled receptor activity"/>
    <property type="evidence" value="ECO:0000318"/>
    <property type="project" value="GO_Central"/>
</dbReference>
<dbReference type="GO" id="GO:0042562">
    <property type="term" value="F:hormone binding"/>
    <property type="evidence" value="ECO:0000353"/>
    <property type="project" value="BHF-UCL"/>
</dbReference>
<dbReference type="GO" id="GO:0008502">
    <property type="term" value="F:melatonin receptor activity"/>
    <property type="evidence" value="ECO:0000314"/>
    <property type="project" value="BHF-UCL"/>
</dbReference>
<dbReference type="GO" id="GO:0007193">
    <property type="term" value="P:adenylate cyclase-inhibiting G protein-coupled receptor signaling pathway"/>
    <property type="evidence" value="ECO:0000314"/>
    <property type="project" value="BHF-UCL"/>
</dbReference>
<dbReference type="GO" id="GO:0007623">
    <property type="term" value="P:circadian rhythm"/>
    <property type="evidence" value="ECO:0000304"/>
    <property type="project" value="ProtInc"/>
</dbReference>
<dbReference type="GO" id="GO:0007186">
    <property type="term" value="P:G protein-coupled receptor signaling pathway"/>
    <property type="evidence" value="ECO:0000318"/>
    <property type="project" value="GO_Central"/>
</dbReference>
<dbReference type="GO" id="GO:0007187">
    <property type="term" value="P:G protein-coupled receptor signaling pathway, coupled to cyclic nucleotide second messenger"/>
    <property type="evidence" value="ECO:0000304"/>
    <property type="project" value="ProtInc"/>
</dbReference>
<dbReference type="GO" id="GO:0007617">
    <property type="term" value="P:mating behavior"/>
    <property type="evidence" value="ECO:0000304"/>
    <property type="project" value="ProtInc"/>
</dbReference>
<dbReference type="FunFam" id="1.20.1070.10:FF:000056">
    <property type="entry name" value="Melatonin receptor type 1A"/>
    <property type="match status" value="1"/>
</dbReference>
<dbReference type="Gene3D" id="1.20.1070.10">
    <property type="entry name" value="Rhodopsin 7-helix transmembrane proteins"/>
    <property type="match status" value="1"/>
</dbReference>
<dbReference type="InterPro" id="IPR000276">
    <property type="entry name" value="GPCR_Rhodpsn"/>
</dbReference>
<dbReference type="InterPro" id="IPR017452">
    <property type="entry name" value="GPCR_Rhodpsn_7TM"/>
</dbReference>
<dbReference type="InterPro" id="IPR002278">
    <property type="entry name" value="Mel_1A/1B_rcpt"/>
</dbReference>
<dbReference type="InterPro" id="IPR000025">
    <property type="entry name" value="Melatonin_rcpt"/>
</dbReference>
<dbReference type="PANTHER" id="PTHR24228">
    <property type="entry name" value="B2 BRADYKININ RECEPTOR/ANGIOTENSIN II RECEPTOR"/>
    <property type="match status" value="1"/>
</dbReference>
<dbReference type="PANTHER" id="PTHR24228:SF53">
    <property type="entry name" value="MELATONIN RECEPTOR TYPE 1A"/>
    <property type="match status" value="1"/>
</dbReference>
<dbReference type="Pfam" id="PF00001">
    <property type="entry name" value="7tm_1"/>
    <property type="match status" value="1"/>
</dbReference>
<dbReference type="PRINTS" id="PR00237">
    <property type="entry name" value="GPCRRHODOPSN"/>
</dbReference>
<dbReference type="PRINTS" id="PR01149">
    <property type="entry name" value="MELATONIN1AR"/>
</dbReference>
<dbReference type="PRINTS" id="PR00857">
    <property type="entry name" value="MELATONINR"/>
</dbReference>
<dbReference type="SMART" id="SM01381">
    <property type="entry name" value="7TM_GPCR_Srsx"/>
    <property type="match status" value="1"/>
</dbReference>
<dbReference type="SUPFAM" id="SSF81321">
    <property type="entry name" value="Family A G protein-coupled receptor-like"/>
    <property type="match status" value="1"/>
</dbReference>
<dbReference type="PROSITE" id="PS00237">
    <property type="entry name" value="G_PROTEIN_RECEP_F1_1"/>
    <property type="match status" value="1"/>
</dbReference>
<dbReference type="PROSITE" id="PS50262">
    <property type="entry name" value="G_PROTEIN_RECEP_F1_2"/>
    <property type="match status" value="1"/>
</dbReference>
<feature type="chain" id="PRO_0000069862" description="Melatonin receptor type 1A">
    <location>
        <begin position="1"/>
        <end position="350"/>
    </location>
</feature>
<feature type="topological domain" description="Extracellular" evidence="2">
    <location>
        <begin position="1"/>
        <end position="29"/>
    </location>
</feature>
<feature type="transmembrane region" description="Helical; Name=1" evidence="2">
    <location>
        <begin position="30"/>
        <end position="50"/>
    </location>
</feature>
<feature type="topological domain" description="Cytoplasmic" evidence="2">
    <location>
        <begin position="51"/>
        <end position="63"/>
    </location>
</feature>
<feature type="transmembrane region" description="Helical; Name=2" evidence="2">
    <location>
        <begin position="64"/>
        <end position="84"/>
    </location>
</feature>
<feature type="topological domain" description="Extracellular" evidence="2">
    <location>
        <begin position="85"/>
        <end position="102"/>
    </location>
</feature>
<feature type="transmembrane region" description="Helical; Name=3" evidence="2">
    <location>
        <begin position="103"/>
        <end position="123"/>
    </location>
</feature>
<feature type="topological domain" description="Cytoplasmic" evidence="2">
    <location>
        <begin position="124"/>
        <end position="142"/>
    </location>
</feature>
<feature type="transmembrane region" description="Helical; Name=4" evidence="2">
    <location>
        <begin position="143"/>
        <end position="163"/>
    </location>
</feature>
<feature type="topological domain" description="Extracellular" evidence="2">
    <location>
        <begin position="164"/>
        <end position="187"/>
    </location>
</feature>
<feature type="transmembrane region" description="Helical; Name=5" evidence="2">
    <location>
        <begin position="188"/>
        <end position="208"/>
    </location>
</feature>
<feature type="topological domain" description="Cytoplasmic" evidence="2">
    <location>
        <begin position="209"/>
        <end position="240"/>
    </location>
</feature>
<feature type="transmembrane region" description="Helical; Name=6" evidence="2">
    <location>
        <begin position="241"/>
        <end position="261"/>
    </location>
</feature>
<feature type="topological domain" description="Extracellular" evidence="2">
    <location>
        <begin position="262"/>
        <end position="274"/>
    </location>
</feature>
<feature type="transmembrane region" description="Helical; Name=7" evidence="2">
    <location>
        <begin position="275"/>
        <end position="295"/>
    </location>
</feature>
<feature type="topological domain" description="Cytoplasmic" evidence="2">
    <location>
        <begin position="296"/>
        <end position="350"/>
    </location>
</feature>
<feature type="binding site" evidence="5 7">
    <location>
        <position position="162"/>
    </location>
    <ligand>
        <name>melatonin</name>
        <dbReference type="ChEBI" id="CHEBI:16796"/>
    </ligand>
</feature>
<feature type="binding site" evidence="5 7">
    <location>
        <position position="181"/>
    </location>
    <ligand>
        <name>melatonin</name>
        <dbReference type="ChEBI" id="CHEBI:16796"/>
    </ligand>
</feature>
<feature type="glycosylation site" description="N-linked (GlcNAc...) asparagine" evidence="2">
    <location>
        <position position="4"/>
    </location>
</feature>
<feature type="glycosylation site" description="N-linked (GlcNAc...) asparagine" evidence="2">
    <location>
        <position position="10"/>
    </location>
</feature>
<feature type="disulfide bond" evidence="3 5 6">
    <location>
        <begin position="100"/>
        <end position="177"/>
    </location>
</feature>
<feature type="sequence variant" id="VAR_009260" description="Exhibits significantly reduced B(max) and slightly enhanced affinity; dbSNP:rs1800885." evidence="4">
    <original>R</original>
    <variation>W</variation>
    <location>
        <position position="54"/>
    </location>
</feature>
<feature type="sequence variant" id="VAR_009261" description="Similar binding characteristics compared to wild-type; dbSNP:rs1800884." evidence="4">
    <original>A</original>
    <variation>V</variation>
    <location>
        <position position="157"/>
    </location>
</feature>
<feature type="sequence variant" id="VAR_049420" description="In dbSNP:rs7654853.">
    <original>I</original>
    <variation>T</variation>
    <location>
        <position position="212"/>
    </location>
</feature>
<feature type="helix" evidence="8">
    <location>
        <begin position="24"/>
        <end position="54"/>
    </location>
</feature>
<feature type="turn" evidence="8">
    <location>
        <begin position="56"/>
        <end position="58"/>
    </location>
</feature>
<feature type="helix" evidence="8">
    <location>
        <begin position="61"/>
        <end position="63"/>
    </location>
</feature>
<feature type="helix" evidence="8">
    <location>
        <begin position="64"/>
        <end position="78"/>
    </location>
</feature>
<feature type="helix" evidence="8">
    <location>
        <begin position="80"/>
        <end position="90"/>
    </location>
</feature>
<feature type="helix" evidence="8">
    <location>
        <begin position="96"/>
        <end position="134"/>
    </location>
</feature>
<feature type="helix" evidence="9">
    <location>
        <begin position="135"/>
        <end position="138"/>
    </location>
</feature>
<feature type="helix" evidence="8">
    <location>
        <begin position="144"/>
        <end position="159"/>
    </location>
</feature>
<feature type="helix" evidence="8">
    <location>
        <begin position="161"/>
        <end position="165"/>
    </location>
</feature>
<feature type="strand" evidence="8">
    <location>
        <begin position="168"/>
        <end position="171"/>
    </location>
</feature>
<feature type="turn" evidence="8">
    <location>
        <begin position="172"/>
        <end position="175"/>
    </location>
</feature>
<feature type="strand" evidence="8">
    <location>
        <begin position="176"/>
        <end position="179"/>
    </location>
</feature>
<feature type="turn" evidence="8">
    <location>
        <begin position="181"/>
        <end position="183"/>
    </location>
</feature>
<feature type="helix" evidence="8">
    <location>
        <begin position="185"/>
        <end position="195"/>
    </location>
</feature>
<feature type="helix" evidence="8">
    <location>
        <begin position="197"/>
        <end position="218"/>
    </location>
</feature>
<feature type="turn" evidence="8">
    <location>
        <begin position="229"/>
        <end position="231"/>
    </location>
</feature>
<feature type="helix" evidence="8">
    <location>
        <begin position="235"/>
        <end position="263"/>
    </location>
</feature>
<feature type="helix" evidence="8">
    <location>
        <begin position="265"/>
        <end position="271"/>
    </location>
</feature>
<feature type="helix" evidence="8">
    <location>
        <begin position="274"/>
        <end position="286"/>
    </location>
</feature>
<feature type="helix" evidence="8">
    <location>
        <begin position="287"/>
        <end position="289"/>
    </location>
</feature>
<feature type="helix" evidence="8">
    <location>
        <begin position="290"/>
        <end position="298"/>
    </location>
</feature>
<feature type="helix" evidence="8">
    <location>
        <begin position="300"/>
        <end position="312"/>
    </location>
</feature>
<protein>
    <recommendedName>
        <fullName>Melatonin receptor type 1A</fullName>
        <shortName>Mel-1A-R</shortName>
        <shortName>Mel1a receptor</shortName>
    </recommendedName>
</protein>
<proteinExistence type="evidence at protein level"/>
<sequence length="350" mass="39375">MQGNGSALPNASQPVLRGDGARPSWLASALACVLIFTIVVDILGNLLVILSVYRNKKLRNAGNIFVVSLAVADLVVAIYPYPLVLMSIFNNGWNLGYLHCQVSGFLMGLSVIGSIFNITGIAINRYCYICHSLKYDKLYSSKNSLCYVLLIWLLTLAAVLPNLRAGTLQYDPRIYSCTFAQSVSSAYTIAVVVFHFLVPMIIVIFCYLRIWILVLQVRQRVKPDRKPKLKPQDFRNFVTMFVVFVLFAICWAPLNFIGLAVASDPASMVPRIPEWLFVASYYMAYFNSCLNAIIYGLLNQNFRKEYRRIIVSLCTARVFFVDSSNDVADRVKWKPSPLMTNNNVVKVDSV</sequence>
<comment type="function">
    <text evidence="1">High affinity receptor for melatonin. Likely to mediate the reproductive and circadian actions of melatonin. The activity of this receptor is mediated by pertussis toxin sensitive G proteins that inhibit adenylate cyclase activity. Possibly involved in sleep induction, by melatonin activation of the potassium channel KCNMA1/BK and the dissociation of G-beta and G-gamma subunits, thereby decreasing synaptic transmission (By similarity).</text>
</comment>
<comment type="interaction">
    <interactant intactId="EBI-1188238">
        <id>P48039</id>
    </interactant>
    <interactant intactId="EBI-1049597">
        <id>P27797</id>
        <label>CALR</label>
    </interactant>
    <organismsDiffer>false</organismsDiffer>
    <experiments>3</experiments>
</comment>
<comment type="interaction">
    <interactant intactId="EBI-1188238">
        <id>P48039</id>
    </interactant>
    <interactant intactId="EBI-3867333">
        <id>A8MQ03</id>
        <label>CYSRT1</label>
    </interactant>
    <organismsDiffer>false</organismsDiffer>
    <experiments>3</experiments>
</comment>
<comment type="interaction">
    <interactant intactId="EBI-1188238">
        <id>P48039</id>
    </interactant>
    <interactant intactId="EBI-11749135">
        <id>Q8IUG1</id>
        <label>KRTAP1-3</label>
    </interactant>
    <organismsDiffer>false</organismsDiffer>
    <experiments>3</experiments>
</comment>
<comment type="interaction">
    <interactant intactId="EBI-1188238">
        <id>P48039</id>
    </interactant>
    <interactant intactId="EBI-1188341">
        <id>P49286</id>
        <label>MTNR1B</label>
    </interactant>
    <organismsDiffer>false</organismsDiffer>
    <experiments>2</experiments>
</comment>
<comment type="interaction">
    <interactant intactId="EBI-1188238">
        <id>P48039</id>
    </interactant>
    <interactant intactId="EBI-1052678">
        <id>O76081</id>
        <label>RGS20</label>
    </interactant>
    <organismsDiffer>false</organismsDiffer>
    <experiments>6</experiments>
</comment>
<comment type="interaction">
    <interactant intactId="EBI-1188238">
        <id>P48039</id>
    </interactant>
    <interactant intactId="EBI-1048629">
        <id>P57088</id>
        <label>TMEM33</label>
    </interactant>
    <organismsDiffer>false</organismsDiffer>
    <experiments>3</experiments>
</comment>
<comment type="subcellular location">
    <subcellularLocation>
        <location>Cell membrane</location>
        <topology>Multi-pass membrane protein</topology>
    </subcellularLocation>
</comment>
<comment type="tissue specificity">
    <text>Expressed in hypophyseal pars tuberalis and hypothalamic suprachiasmatic nuclei (SCN). Hippocampus.</text>
</comment>
<comment type="similarity">
    <text evidence="3">Belongs to the G-protein coupled receptor 1 family.</text>
</comment>
<comment type="online information" name="Wikipedia">
    <link uri="https://en.wikipedia.org/wiki/Melatonin_receptor"/>
    <text>Melatonin receptor entry</text>
</comment>
<name>MTR1A_HUMAN</name>
<accession>P48039</accession>
<accession>A0AVC5</accession>
<accession>B0M0L2</accession>
<organism>
    <name type="scientific">Homo sapiens</name>
    <name type="common">Human</name>
    <dbReference type="NCBI Taxonomy" id="9606"/>
    <lineage>
        <taxon>Eukaryota</taxon>
        <taxon>Metazoa</taxon>
        <taxon>Chordata</taxon>
        <taxon>Craniata</taxon>
        <taxon>Vertebrata</taxon>
        <taxon>Euteleostomi</taxon>
        <taxon>Mammalia</taxon>
        <taxon>Eutheria</taxon>
        <taxon>Euarchontoglires</taxon>
        <taxon>Primates</taxon>
        <taxon>Haplorrhini</taxon>
        <taxon>Catarrhini</taxon>
        <taxon>Hominidae</taxon>
        <taxon>Homo</taxon>
    </lineage>
</organism>
<evidence type="ECO:0000250" key="1">
    <source>
        <dbReference type="UniProtKB" id="Q61184"/>
    </source>
</evidence>
<evidence type="ECO:0000255" key="2"/>
<evidence type="ECO:0000255" key="3">
    <source>
        <dbReference type="PROSITE-ProRule" id="PRU00521"/>
    </source>
</evidence>
<evidence type="ECO:0000269" key="4">
    <source>
    </source>
</evidence>
<evidence type="ECO:0000269" key="5">
    <source>
    </source>
</evidence>
<evidence type="ECO:0007744" key="6">
    <source>
        <dbReference type="PDB" id="6ME2"/>
    </source>
</evidence>
<evidence type="ECO:0007744" key="7">
    <source>
        <dbReference type="PDB" id="6ME3"/>
    </source>
</evidence>
<evidence type="ECO:0007829" key="8">
    <source>
        <dbReference type="PDB" id="6ME2"/>
    </source>
</evidence>
<evidence type="ECO:0007829" key="9">
    <source>
        <dbReference type="PDB" id="7VGY"/>
    </source>
</evidence>
<keyword id="KW-0002">3D-structure</keyword>
<keyword id="KW-1003">Cell membrane</keyword>
<keyword id="KW-1015">Disulfide bond</keyword>
<keyword id="KW-0297">G-protein coupled receptor</keyword>
<keyword id="KW-0325">Glycoprotein</keyword>
<keyword id="KW-0472">Membrane</keyword>
<keyword id="KW-0675">Receptor</keyword>
<keyword id="KW-1185">Reference proteome</keyword>
<keyword id="KW-0807">Transducer</keyword>
<keyword id="KW-0812">Transmembrane</keyword>
<keyword id="KW-1133">Transmembrane helix</keyword>